<accession>Q01939</accession>
<accession>D6VU92</accession>
<feature type="initiator methionine" description="Removed" evidence="3">
    <location>
        <position position="1"/>
    </location>
</feature>
<feature type="chain" id="PRO_0000084730" description="26S proteasome regulatory subunit 8 homolog">
    <location>
        <begin position="2"/>
        <end position="405"/>
    </location>
</feature>
<feature type="binding site">
    <location>
        <begin position="189"/>
        <end position="196"/>
    </location>
    <ligand>
        <name>ATP</name>
        <dbReference type="ChEBI" id="CHEBI:30616"/>
    </ligand>
</feature>
<feature type="modified residue" description="N-acetylthreonine" evidence="3">
    <location>
        <position position="2"/>
    </location>
</feature>
<feature type="sequence conflict" description="In Ref. 1; CAA47023." evidence="7" ref="1">
    <original>V</original>
    <variation>G</variation>
    <location>
        <position position="41"/>
    </location>
</feature>
<comment type="function">
    <text evidence="1 6">The 26S proteasome is involved in the ATP-dependent degradation of ubiquitinated proteins. The regulatory (or ATPase) complex confers ATP dependency and substrate specificity to the 26S complex (By similarity).</text>
</comment>
<comment type="subunit">
    <text evidence="2 5 6">May form a homodimer or a heterodimer with a related family member. Interacts with OLA1, TMA17, and UBR1.</text>
</comment>
<comment type="interaction">
    <interactant intactId="EBI-13914">
        <id>Q01939</id>
    </interactant>
    <interactant intactId="EBI-4396">
        <id>P31384</id>
        <label>CCR4</label>
    </interactant>
    <organismsDiffer>false</organismsDiffer>
    <experiments>3</experiments>
</comment>
<comment type="interaction">
    <interactant intactId="EBI-13914">
        <id>Q01939</id>
    </interactant>
    <interactant intactId="EBI-12174">
        <id>P34909</id>
        <label>MOT2</label>
    </interactant>
    <organismsDiffer>false</organismsDiffer>
    <experiments>2</experiments>
</comment>
<comment type="interaction">
    <interactant intactId="EBI-13914">
        <id>Q01939</id>
    </interactant>
    <interactant intactId="EBI-13988">
        <id>P22141</id>
        <label>PRE1</label>
    </interactant>
    <organismsDiffer>false</organismsDiffer>
    <experiments>2</experiments>
</comment>
<comment type="interaction">
    <interactant intactId="EBI-13914">
        <id>Q01939</id>
    </interactant>
    <interactant intactId="EBI-14668">
        <id>P32628</id>
        <label>RAD23</label>
    </interactant>
    <organismsDiffer>false</organismsDiffer>
    <experiments>7</experiments>
</comment>
<comment type="interaction">
    <interactant intactId="EBI-13914">
        <id>Q01939</id>
    </interactant>
    <interactant intactId="EBI-15913">
        <id>P38764</id>
        <label>RPN1</label>
    </interactant>
    <organismsDiffer>false</organismsDiffer>
    <experiments>4</experiments>
</comment>
<comment type="interaction">
    <interactant intactId="EBI-13914">
        <id>Q01939</id>
    </interactant>
    <interactant intactId="EBI-11219">
        <id>P43588</id>
        <label>RPN11</label>
    </interactant>
    <organismsDiffer>false</organismsDiffer>
    <experiments>3</experiments>
</comment>
<comment type="interaction">
    <interactant intactId="EBI-13914">
        <id>Q01939</id>
    </interactant>
    <interactant intactId="EBI-23691">
        <id>P53196</id>
        <label>RPN14</label>
    </interactant>
    <organismsDiffer>false</organismsDiffer>
    <experiments>10</experiments>
</comment>
<comment type="interaction">
    <interactant intactId="EBI-13914">
        <id>Q01939</id>
    </interactant>
    <interactant intactId="EBI-13910">
        <id>P33299</id>
        <label>RPT1</label>
    </interactant>
    <organismsDiffer>false</organismsDiffer>
    <experiments>8</experiments>
</comment>
<comment type="interaction">
    <interactant intactId="EBI-13914">
        <id>Q01939</id>
    </interactant>
    <interactant intactId="EBI-13905">
        <id>P33298</id>
        <label>RPT3</label>
    </interactant>
    <organismsDiffer>false</organismsDiffer>
    <experiments>7</experiments>
</comment>
<comment type="interaction">
    <interactant intactId="EBI-13914">
        <id>Q01939</id>
    </interactant>
    <interactant intactId="EBI-18520">
        <id>P53549</id>
        <label>RPT4</label>
    </interactant>
    <organismsDiffer>false</organismsDiffer>
    <experiments>4</experiments>
</comment>
<comment type="interaction">
    <interactant intactId="EBI-13914">
        <id>Q01939</id>
    </interactant>
    <interactant intactId="EBI-13920">
        <id>P33297</id>
        <label>RPT5</label>
    </interactant>
    <organismsDiffer>false</organismsDiffer>
    <experiments>3</experiments>
</comment>
<comment type="interaction">
    <interactant intactId="EBI-13914">
        <id>Q01939</id>
    </interactant>
    <interactant intactId="EBI-31337">
        <id>O94742</id>
        <label>SEM1</label>
    </interactant>
    <organismsDiffer>false</organismsDiffer>
    <experiments>2</experiments>
</comment>
<comment type="interaction">
    <interactant intactId="EBI-13914">
        <id>Q01939</id>
    </interactant>
    <interactant intactId="EBI-19129">
        <id>P13393</id>
        <label>SPT15</label>
    </interactant>
    <organismsDiffer>false</organismsDiffer>
    <experiments>2</experiments>
</comment>
<comment type="interaction">
    <interactant intactId="EBI-13914">
        <id>Q01939</id>
    </interactant>
    <interactant intactId="EBI-8591">
        <id>P10591</id>
        <label>SSA1</label>
    </interactant>
    <organismsDiffer>false</organismsDiffer>
    <experiments>2</experiments>
</comment>
<comment type="interaction">
    <interactant intactId="EBI-13914">
        <id>Q01939</id>
    </interactant>
    <interactant intactId="EBI-19909">
        <id>P19812</id>
        <label>UBR1</label>
    </interactant>
    <organismsDiffer>false</organismsDiffer>
    <experiments>4</experiments>
</comment>
<comment type="interaction">
    <interactant intactId="EBI-13914">
        <id>Q01939</id>
    </interactant>
    <interactant intactId="EBI-20010">
        <id>P33202</id>
        <label>UFD4</label>
    </interactant>
    <organismsDiffer>false</organismsDiffer>
    <experiments>3</experiments>
</comment>
<comment type="subcellular location">
    <subcellularLocation>
        <location evidence="7">Cytoplasm</location>
    </subcellularLocation>
    <subcellularLocation>
        <location evidence="7">Nucleus</location>
    </subcellularLocation>
</comment>
<comment type="PTM">
    <text evidence="3">N-acetylated by NAT1.</text>
</comment>
<comment type="miscellaneous">
    <text evidence="4">Present with 4700 molecules/cell in log phase SD medium.</text>
</comment>
<comment type="similarity">
    <text evidence="7">Belongs to the AAA ATPase family.</text>
</comment>
<reference key="1">
    <citation type="journal article" date="1992" name="Nature">
        <title>Alterations in a yeast protein resembling HIV Tat-binding protein relieve requirement for an acidic activation domain in GAL4.</title>
        <authorList>
            <person name="Swaffield J.C."/>
            <person name="Bromberg J.F."/>
            <person name="Johnston S.A."/>
        </authorList>
    </citation>
    <scope>NUCLEOTIDE SEQUENCE [GENOMIC DNA]</scope>
</reference>
<reference key="2">
    <citation type="journal article" date="1992" name="DNA Cell Biol.">
        <title>Isolation of a yeast gene encoding a protein homologous to the human Tat-binding protein TBP-1.</title>
        <authorList>
            <person name="Goyer C."/>
            <person name="Lee H.S."/>
            <person name="Malo D."/>
            <person name="Sonenberg N."/>
        </authorList>
    </citation>
    <scope>NUCLEOTIDE SEQUENCE [GENOMIC DNA]</scope>
</reference>
<reference key="3">
    <citation type="journal article" date="1997" name="Yeast">
        <title>The characterization of two new clusters of duplicated genes suggests a 'Lego' organization of the yeast Saccharomyces cerevisiae chromosomes.</title>
        <authorList>
            <person name="Feuermann M."/>
            <person name="de Montigny J."/>
            <person name="Potier S."/>
            <person name="Souciet J.-L."/>
        </authorList>
    </citation>
    <scope>NUCLEOTIDE SEQUENCE [GENOMIC DNA]</scope>
    <source>
        <strain>ATCC 204508 / S288c</strain>
    </source>
</reference>
<reference key="4">
    <citation type="journal article" date="1997" name="Nature">
        <title>The nucleotide sequence of Saccharomyces cerevisiae chromosome VII.</title>
        <authorList>
            <person name="Tettelin H."/>
            <person name="Agostoni-Carbone M.L."/>
            <person name="Albermann K."/>
            <person name="Albers M."/>
            <person name="Arroyo J."/>
            <person name="Backes U."/>
            <person name="Barreiros T."/>
            <person name="Bertani I."/>
            <person name="Bjourson A.J."/>
            <person name="Brueckner M."/>
            <person name="Bruschi C.V."/>
            <person name="Carignani G."/>
            <person name="Castagnoli L."/>
            <person name="Cerdan E."/>
            <person name="Clemente M.L."/>
            <person name="Coblenz A."/>
            <person name="Coglievina M."/>
            <person name="Coissac E."/>
            <person name="Defoor E."/>
            <person name="Del Bino S."/>
            <person name="Delius H."/>
            <person name="Delneri D."/>
            <person name="de Wergifosse P."/>
            <person name="Dujon B."/>
            <person name="Durand P."/>
            <person name="Entian K.-D."/>
            <person name="Eraso P."/>
            <person name="Escribano V."/>
            <person name="Fabiani L."/>
            <person name="Fartmann B."/>
            <person name="Feroli F."/>
            <person name="Feuermann M."/>
            <person name="Frontali L."/>
            <person name="Garcia-Gonzalez M."/>
            <person name="Garcia-Saez M.I."/>
            <person name="Goffeau A."/>
            <person name="Guerreiro P."/>
            <person name="Hani J."/>
            <person name="Hansen M."/>
            <person name="Hebling U."/>
            <person name="Hernandez K."/>
            <person name="Heumann K."/>
            <person name="Hilger F."/>
            <person name="Hofmann B."/>
            <person name="Indge K.J."/>
            <person name="James C.M."/>
            <person name="Klima R."/>
            <person name="Koetter P."/>
            <person name="Kramer B."/>
            <person name="Kramer W."/>
            <person name="Lauquin G."/>
            <person name="Leuther H."/>
            <person name="Louis E.J."/>
            <person name="Maillier E."/>
            <person name="Marconi A."/>
            <person name="Martegani E."/>
            <person name="Mazon M.J."/>
            <person name="Mazzoni C."/>
            <person name="McReynolds A.D.K."/>
            <person name="Melchioretto P."/>
            <person name="Mewes H.-W."/>
            <person name="Minenkova O."/>
            <person name="Mueller-Auer S."/>
            <person name="Nawrocki A."/>
            <person name="Netter P."/>
            <person name="Neu R."/>
            <person name="Nombela C."/>
            <person name="Oliver S.G."/>
            <person name="Panzeri L."/>
            <person name="Paoluzi S."/>
            <person name="Plevani P."/>
            <person name="Portetelle D."/>
            <person name="Portillo F."/>
            <person name="Potier S."/>
            <person name="Purnelle B."/>
            <person name="Rieger M."/>
            <person name="Riles L."/>
            <person name="Rinaldi T."/>
            <person name="Robben J."/>
            <person name="Rodrigues-Pousada C."/>
            <person name="Rodriguez-Belmonte E."/>
            <person name="Rodriguez-Torres A.M."/>
            <person name="Rose M."/>
            <person name="Ruzzi M."/>
            <person name="Saliola M."/>
            <person name="Sanchez-Perez M."/>
            <person name="Schaefer B."/>
            <person name="Schaefer M."/>
            <person name="Scharfe M."/>
            <person name="Schmidheini T."/>
            <person name="Schreer A."/>
            <person name="Skala J."/>
            <person name="Souciet J.-L."/>
            <person name="Steensma H.Y."/>
            <person name="Talla E."/>
            <person name="Thierry A."/>
            <person name="Vandenbol M."/>
            <person name="van der Aart Q.J.M."/>
            <person name="Van Dyck L."/>
            <person name="Vanoni M."/>
            <person name="Verhasselt P."/>
            <person name="Voet M."/>
            <person name="Volckaert G."/>
            <person name="Wambutt R."/>
            <person name="Watson M.D."/>
            <person name="Weber N."/>
            <person name="Wedler E."/>
            <person name="Wedler H."/>
            <person name="Wipfli P."/>
            <person name="Wolf K."/>
            <person name="Wright L.F."/>
            <person name="Zaccaria P."/>
            <person name="Zimmermann M."/>
            <person name="Zollner A."/>
            <person name="Kleine K."/>
        </authorList>
    </citation>
    <scope>NUCLEOTIDE SEQUENCE [LARGE SCALE GENOMIC DNA]</scope>
    <source>
        <strain>ATCC 204508 / S288c</strain>
    </source>
</reference>
<reference key="5">
    <citation type="journal article" date="2014" name="G3 (Bethesda)">
        <title>The reference genome sequence of Saccharomyces cerevisiae: Then and now.</title>
        <authorList>
            <person name="Engel S.R."/>
            <person name="Dietrich F.S."/>
            <person name="Fisk D.G."/>
            <person name="Binkley G."/>
            <person name="Balakrishnan R."/>
            <person name="Costanzo M.C."/>
            <person name="Dwight S.S."/>
            <person name="Hitz B.C."/>
            <person name="Karra K."/>
            <person name="Nash R.S."/>
            <person name="Weng S."/>
            <person name="Wong E.D."/>
            <person name="Lloyd P."/>
            <person name="Skrzypek M.S."/>
            <person name="Miyasato S.R."/>
            <person name="Simison M."/>
            <person name="Cherry J.M."/>
        </authorList>
    </citation>
    <scope>GENOME REANNOTATION</scope>
    <source>
        <strain>ATCC 204508 / S288c</strain>
    </source>
</reference>
<reference key="6">
    <citation type="journal article" date="2007" name="Genome Res.">
        <title>Approaching a complete repository of sequence-verified protein-encoding clones for Saccharomyces cerevisiae.</title>
        <authorList>
            <person name="Hu Y."/>
            <person name="Rolfs A."/>
            <person name="Bhullar B."/>
            <person name="Murthy T.V.S."/>
            <person name="Zhu C."/>
            <person name="Berger M.F."/>
            <person name="Camargo A.A."/>
            <person name="Kelley F."/>
            <person name="McCarron S."/>
            <person name="Jepson D."/>
            <person name="Richardson A."/>
            <person name="Raphael J."/>
            <person name="Moreira D."/>
            <person name="Taycher E."/>
            <person name="Zuo D."/>
            <person name="Mohr S."/>
            <person name="Kane M.F."/>
            <person name="Williamson J."/>
            <person name="Simpson A.J.G."/>
            <person name="Bulyk M.L."/>
            <person name="Harlow E."/>
            <person name="Marsischky G."/>
            <person name="Kolodner R.D."/>
            <person name="LaBaer J."/>
        </authorList>
    </citation>
    <scope>NUCLEOTIDE SEQUENCE [GENOMIC DNA]</scope>
    <source>
        <strain>ATCC 204508 / S288c</strain>
    </source>
</reference>
<reference key="7">
    <citation type="journal article" date="2003" name="Arch. Biochem. Biophys.">
        <title>N-terminal modifications of the 19S regulatory particle subunits of the yeast proteasome.</title>
        <authorList>
            <person name="Kimura Y."/>
            <person name="Saeki Y."/>
            <person name="Yokosawa H."/>
            <person name="Polevoda B."/>
            <person name="Sherman F."/>
            <person name="Hirano H."/>
        </authorList>
    </citation>
    <scope>PROTEIN SEQUENCE OF 2-9</scope>
    <scope>ACETYLATION AT THR-2</scope>
</reference>
<reference key="8">
    <citation type="journal article" date="1995" name="Enzyme Protein">
        <title>The proteasome is linked to cycloheximide resistance in yeast: CRL3 is a subunit of the 26S proteasome.</title>
        <authorList>
            <person name="Gerlinger U.-M."/>
            <person name="Wolf D.H."/>
            <person name="Hilt W."/>
        </authorList>
    </citation>
    <scope>CHARACTERIZATION</scope>
</reference>
<reference key="9">
    <citation type="journal article" date="1996" name="Nature">
        <title>Identification of the gal4 suppressor Sug1 as a subunit of the yeast 26S proteasome.</title>
        <authorList>
            <person name="Rubin D.M."/>
            <person name="Coux O."/>
            <person name="Wefes I."/>
            <person name="Hengartner C."/>
            <person name="Young R.A."/>
            <person name="Goldberg A.L."/>
            <person name="Finley D."/>
        </authorList>
    </citation>
    <scope>CHARACTERIZATION</scope>
</reference>
<reference key="10">
    <citation type="journal article" date="2000" name="Proc. Natl. Acad. Sci. U.S.A.">
        <title>Physical association of ubiquitin ligases and the 26S proteasome.</title>
        <authorList>
            <person name="Xie Y."/>
            <person name="Varshavsky A."/>
        </authorList>
    </citation>
    <scope>INTERACTION WITH UBR1</scope>
</reference>
<reference key="11">
    <citation type="journal article" date="2003" name="Nature">
        <title>Global analysis of protein expression in yeast.</title>
        <authorList>
            <person name="Ghaemmaghami S."/>
            <person name="Huh W.-K."/>
            <person name="Bower K."/>
            <person name="Howson R.W."/>
            <person name="Belle A."/>
            <person name="Dephoure N."/>
            <person name="O'Shea E.K."/>
            <person name="Weissman J.S."/>
        </authorList>
    </citation>
    <scope>LEVEL OF PROTEIN EXPRESSION [LARGE SCALE ANALYSIS]</scope>
</reference>
<reference key="12">
    <citation type="journal article" date="2006" name="Mol. Cell. Proteomics">
        <title>An integrated mass spectrometry-based proteomic approach: quantitative analysis of tandem affinity-purified in vivo cross-linked protein complexes (QTAX) to decipher the 26 S proteasome-interacting network.</title>
        <authorList>
            <person name="Guerrero C."/>
            <person name="Tagwerker C."/>
            <person name="Kaiser P."/>
            <person name="Huang L."/>
        </authorList>
    </citation>
    <scope>INTERACTION WITH OLA1</scope>
</reference>
<reference key="13">
    <citation type="journal article" date="2012" name="Proc. Natl. Acad. Sci. U.S.A.">
        <title>Near-atomic resolution structural model of the yeast 26S proteasome.</title>
        <authorList>
            <person name="Beck F."/>
            <person name="Unverdorben P."/>
            <person name="Bohn S."/>
            <person name="Schweitzer A."/>
            <person name="Pfeifer G."/>
            <person name="Sakata E."/>
            <person name="Nickell S."/>
            <person name="Plitzko J.M."/>
            <person name="Villa E."/>
            <person name="Baumeister W."/>
            <person name="Forster F."/>
        </authorList>
    </citation>
    <scope>STRUCTURE BY ELECTRON MICROSCOPY (7.4 ANGSTROMS) OF THE 26S PROTEASOME</scope>
</reference>
<reference key="14">
    <citation type="journal article" date="2014" name="Mol. Cell">
        <title>An inducible chaperone adapts proteasome assembly to stress.</title>
        <authorList>
            <person name="Hanssum A."/>
            <person name="Zhong Z."/>
            <person name="Rousseau A."/>
            <person name="Krzyzosiak A."/>
            <person name="Sigurdardottir A."/>
            <person name="Bertolotti A."/>
        </authorList>
    </citation>
    <scope>FUNCTION</scope>
    <scope>INTERACTION WITH TMA17</scope>
</reference>
<dbReference type="EMBL" id="X66400">
    <property type="protein sequence ID" value="CAA47023.1"/>
    <property type="molecule type" value="Genomic_DNA"/>
</dbReference>
<dbReference type="EMBL" id="L01626">
    <property type="protein sequence ID" value="AAA35138.1"/>
    <property type="molecule type" value="Genomic_DNA"/>
</dbReference>
<dbReference type="EMBL" id="Z72570">
    <property type="protein sequence ID" value="CAA96750.1"/>
    <property type="molecule type" value="Genomic_DNA"/>
</dbReference>
<dbReference type="EMBL" id="AY693135">
    <property type="protein sequence ID" value="AAT93154.1"/>
    <property type="molecule type" value="Genomic_DNA"/>
</dbReference>
<dbReference type="EMBL" id="BK006941">
    <property type="protein sequence ID" value="DAA08053.1"/>
    <property type="molecule type" value="Genomic_DNA"/>
</dbReference>
<dbReference type="PIR" id="S64052">
    <property type="entry name" value="S64052"/>
</dbReference>
<dbReference type="RefSeq" id="NP_011467.1">
    <property type="nucleotide sequence ID" value="NM_001180913.1"/>
</dbReference>
<dbReference type="PDB" id="3JCO">
    <property type="method" value="EM"/>
    <property type="resolution" value="4.80 A"/>
    <property type="chains" value="J=1-405"/>
</dbReference>
<dbReference type="PDB" id="3JCP">
    <property type="method" value="EM"/>
    <property type="resolution" value="4.60 A"/>
    <property type="chains" value="J=1-405"/>
</dbReference>
<dbReference type="PDB" id="4CR2">
    <property type="method" value="EM"/>
    <property type="resolution" value="7.70 A"/>
    <property type="chains" value="J=1-405"/>
</dbReference>
<dbReference type="PDB" id="4CR3">
    <property type="method" value="EM"/>
    <property type="resolution" value="9.30 A"/>
    <property type="chains" value="J=1-405"/>
</dbReference>
<dbReference type="PDB" id="4CR4">
    <property type="method" value="EM"/>
    <property type="resolution" value="8.80 A"/>
    <property type="chains" value="J=1-405"/>
</dbReference>
<dbReference type="PDB" id="5A5B">
    <property type="method" value="EM"/>
    <property type="resolution" value="9.50 A"/>
    <property type="chains" value="J=1-405"/>
</dbReference>
<dbReference type="PDB" id="5MP9">
    <property type="method" value="EM"/>
    <property type="resolution" value="4.10 A"/>
    <property type="chains" value="J=1-405"/>
</dbReference>
<dbReference type="PDB" id="5MPA">
    <property type="method" value="EM"/>
    <property type="resolution" value="4.50 A"/>
    <property type="chains" value="J=1-405"/>
</dbReference>
<dbReference type="PDB" id="5MPB">
    <property type="method" value="EM"/>
    <property type="resolution" value="7.80 A"/>
    <property type="chains" value="J=1-405"/>
</dbReference>
<dbReference type="PDB" id="5MPC">
    <property type="method" value="EM"/>
    <property type="resolution" value="7.70 A"/>
    <property type="chains" value="J=1-405"/>
</dbReference>
<dbReference type="PDB" id="5WVI">
    <property type="method" value="EM"/>
    <property type="resolution" value="6.30 A"/>
    <property type="chains" value="J=1-405"/>
</dbReference>
<dbReference type="PDB" id="5WVK">
    <property type="method" value="EM"/>
    <property type="resolution" value="4.20 A"/>
    <property type="chains" value="J=1-405"/>
</dbReference>
<dbReference type="PDB" id="6EF0">
    <property type="method" value="EM"/>
    <property type="resolution" value="4.43 A"/>
    <property type="chains" value="J=130-405"/>
</dbReference>
<dbReference type="PDB" id="6EF1">
    <property type="method" value="EM"/>
    <property type="resolution" value="4.73 A"/>
    <property type="chains" value="J=133-405"/>
</dbReference>
<dbReference type="PDB" id="6EF2">
    <property type="method" value="EM"/>
    <property type="resolution" value="4.27 A"/>
    <property type="chains" value="J=144-405"/>
</dbReference>
<dbReference type="PDB" id="6EF3">
    <property type="method" value="EM"/>
    <property type="resolution" value="4.17 A"/>
    <property type="chains" value="J=1-405"/>
</dbReference>
<dbReference type="PDB" id="6FVT">
    <property type="method" value="EM"/>
    <property type="resolution" value="4.10 A"/>
    <property type="chains" value="J=1-405"/>
</dbReference>
<dbReference type="PDB" id="6FVU">
    <property type="method" value="EM"/>
    <property type="resolution" value="4.50 A"/>
    <property type="chains" value="J=1-405"/>
</dbReference>
<dbReference type="PDB" id="6FVV">
    <property type="method" value="EM"/>
    <property type="resolution" value="5.40 A"/>
    <property type="chains" value="J=1-405"/>
</dbReference>
<dbReference type="PDB" id="6FVW">
    <property type="method" value="EM"/>
    <property type="resolution" value="4.50 A"/>
    <property type="chains" value="J=3-405"/>
</dbReference>
<dbReference type="PDB" id="6FVX">
    <property type="method" value="EM"/>
    <property type="resolution" value="4.90 A"/>
    <property type="chains" value="J=1-405"/>
</dbReference>
<dbReference type="PDB" id="6FVY">
    <property type="method" value="EM"/>
    <property type="resolution" value="6.10 A"/>
    <property type="chains" value="J=1-405"/>
</dbReference>
<dbReference type="PDB" id="6J2C">
    <property type="method" value="EM"/>
    <property type="resolution" value="7.00 A"/>
    <property type="chains" value="J=1-405"/>
</dbReference>
<dbReference type="PDB" id="6J2N">
    <property type="method" value="EM"/>
    <property type="resolution" value="7.50 A"/>
    <property type="chains" value="J=1-405"/>
</dbReference>
<dbReference type="PDB" id="6J2Q">
    <property type="method" value="EM"/>
    <property type="resolution" value="3.80 A"/>
    <property type="chains" value="J=1-405"/>
</dbReference>
<dbReference type="PDB" id="6J2X">
    <property type="method" value="EM"/>
    <property type="resolution" value="3.80 A"/>
    <property type="chains" value="J=1-405"/>
</dbReference>
<dbReference type="PDB" id="6J30">
    <property type="method" value="EM"/>
    <property type="resolution" value="4.50 A"/>
    <property type="chains" value="J=1-405"/>
</dbReference>
<dbReference type="PDB" id="7QO4">
    <property type="method" value="EM"/>
    <property type="resolution" value="7.00 A"/>
    <property type="chains" value="J=1-405"/>
</dbReference>
<dbReference type="PDB" id="7QO5">
    <property type="method" value="EM"/>
    <property type="resolution" value="6.00 A"/>
    <property type="chains" value="J=1-405"/>
</dbReference>
<dbReference type="PDBsum" id="3JCO"/>
<dbReference type="PDBsum" id="3JCP"/>
<dbReference type="PDBsum" id="4CR2"/>
<dbReference type="PDBsum" id="4CR3"/>
<dbReference type="PDBsum" id="4CR4"/>
<dbReference type="PDBsum" id="5A5B"/>
<dbReference type="PDBsum" id="5MP9"/>
<dbReference type="PDBsum" id="5MPA"/>
<dbReference type="PDBsum" id="5MPB"/>
<dbReference type="PDBsum" id="5MPC"/>
<dbReference type="PDBsum" id="5WVI"/>
<dbReference type="PDBsum" id="5WVK"/>
<dbReference type="PDBsum" id="6EF0"/>
<dbReference type="PDBsum" id="6EF1"/>
<dbReference type="PDBsum" id="6EF2"/>
<dbReference type="PDBsum" id="6EF3"/>
<dbReference type="PDBsum" id="6FVT"/>
<dbReference type="PDBsum" id="6FVU"/>
<dbReference type="PDBsum" id="6FVV"/>
<dbReference type="PDBsum" id="6FVW"/>
<dbReference type="PDBsum" id="6FVX"/>
<dbReference type="PDBsum" id="6FVY"/>
<dbReference type="PDBsum" id="6J2C"/>
<dbReference type="PDBsum" id="6J2N"/>
<dbReference type="PDBsum" id="6J2Q"/>
<dbReference type="PDBsum" id="6J2X"/>
<dbReference type="PDBsum" id="6J30"/>
<dbReference type="PDBsum" id="7QO4"/>
<dbReference type="PDBsum" id="7QO5"/>
<dbReference type="BMRB" id="Q01939"/>
<dbReference type="EMDB" id="EMD-14084"/>
<dbReference type="EMDB" id="EMD-3534"/>
<dbReference type="EMDB" id="EMD-3535"/>
<dbReference type="EMDB" id="EMD-3536"/>
<dbReference type="EMDB" id="EMD-3537"/>
<dbReference type="EMDB" id="EMD-4321"/>
<dbReference type="EMDB" id="EMD-4322"/>
<dbReference type="EMDB" id="EMD-4323"/>
<dbReference type="EMDB" id="EMD-4324"/>
<dbReference type="EMDB" id="EMD-6693"/>
<dbReference type="EMDB" id="EMD-6694"/>
<dbReference type="EMDB" id="EMD-9042"/>
<dbReference type="EMDB" id="EMD-9043"/>
<dbReference type="EMDB" id="EMD-9044"/>
<dbReference type="EMDB" id="EMD-9045"/>
<dbReference type="EMDB" id="EMD-9769"/>
<dbReference type="EMDB" id="EMD-9770"/>
<dbReference type="EMDB" id="EMD-9771"/>
<dbReference type="EMDB" id="EMD-9772"/>
<dbReference type="EMDB" id="EMD-9773"/>
<dbReference type="SMR" id="Q01939"/>
<dbReference type="BioGRID" id="33200">
    <property type="interactions" value="766"/>
</dbReference>
<dbReference type="ComplexPortal" id="CPX-2262">
    <property type="entry name" value="26S proteasome complex"/>
</dbReference>
<dbReference type="DIP" id="DIP-979N"/>
<dbReference type="FunCoup" id="Q01939">
    <property type="interactions" value="1347"/>
</dbReference>
<dbReference type="IntAct" id="Q01939">
    <property type="interactions" value="111"/>
</dbReference>
<dbReference type="MINT" id="Q01939"/>
<dbReference type="STRING" id="4932.YGL048C"/>
<dbReference type="CarbonylDB" id="Q01939"/>
<dbReference type="iPTMnet" id="Q01939"/>
<dbReference type="PaxDb" id="4932-YGL048C"/>
<dbReference type="PeptideAtlas" id="Q01939"/>
<dbReference type="EnsemblFungi" id="YGL048C_mRNA">
    <property type="protein sequence ID" value="YGL048C"/>
    <property type="gene ID" value="YGL048C"/>
</dbReference>
<dbReference type="GeneID" id="852834"/>
<dbReference type="KEGG" id="sce:YGL048C"/>
<dbReference type="AGR" id="SGD:S000003016"/>
<dbReference type="SGD" id="S000003016">
    <property type="gene designation" value="RPT6"/>
</dbReference>
<dbReference type="VEuPathDB" id="FungiDB:YGL048C"/>
<dbReference type="eggNOG" id="KOG0728">
    <property type="taxonomic scope" value="Eukaryota"/>
</dbReference>
<dbReference type="GeneTree" id="ENSGT01020000230346"/>
<dbReference type="HOGENOM" id="CLU_000688_2_0_1"/>
<dbReference type="InParanoid" id="Q01939"/>
<dbReference type="OMA" id="REPAVIF"/>
<dbReference type="OrthoDB" id="1664597at2759"/>
<dbReference type="BioCyc" id="YEAST:G3O-30558-MONOMER"/>
<dbReference type="BRENDA" id="5.6.1.5">
    <property type="organism ID" value="984"/>
</dbReference>
<dbReference type="Reactome" id="R-SCE-1236978">
    <property type="pathway name" value="Cross-presentation of soluble exogenous antigens (endosomes)"/>
</dbReference>
<dbReference type="Reactome" id="R-SCE-5668541">
    <property type="pathway name" value="TNFR2 non-canonical NF-kB pathway"/>
</dbReference>
<dbReference type="Reactome" id="R-SCE-5687128">
    <property type="pathway name" value="MAPK6/MAPK4 signaling"/>
</dbReference>
<dbReference type="Reactome" id="R-SCE-5689880">
    <property type="pathway name" value="Ub-specific processing proteases"/>
</dbReference>
<dbReference type="Reactome" id="R-SCE-68949">
    <property type="pathway name" value="Orc1 removal from chromatin"/>
</dbReference>
<dbReference type="Reactome" id="R-SCE-69017">
    <property type="pathway name" value="CDK-mediated phosphorylation and removal of Cdc6"/>
</dbReference>
<dbReference type="Reactome" id="R-SCE-69601">
    <property type="pathway name" value="Ubiquitin Mediated Degradation of Phosphorylated Cdc25A"/>
</dbReference>
<dbReference type="Reactome" id="R-SCE-8854050">
    <property type="pathway name" value="FBXL7 down-regulates AURKA during mitotic entry and in early mitosis"/>
</dbReference>
<dbReference type="Reactome" id="R-SCE-8948751">
    <property type="pathway name" value="Regulation of PTEN stability and activity"/>
</dbReference>
<dbReference type="Reactome" id="R-SCE-8951664">
    <property type="pathway name" value="Neddylation"/>
</dbReference>
<dbReference type="Reactome" id="R-SCE-9755511">
    <property type="pathway name" value="KEAP1-NFE2L2 pathway"/>
</dbReference>
<dbReference type="Reactome" id="R-SCE-983168">
    <property type="pathway name" value="Antigen processing: Ubiquitination &amp; Proteasome degradation"/>
</dbReference>
<dbReference type="Reactome" id="R-SCE-9907900">
    <property type="pathway name" value="Proteasome assembly"/>
</dbReference>
<dbReference type="BioGRID-ORCS" id="852834">
    <property type="hits" value="4 hits in 10 CRISPR screens"/>
</dbReference>
<dbReference type="EvolutionaryTrace" id="Q01939"/>
<dbReference type="PRO" id="PR:Q01939"/>
<dbReference type="Proteomes" id="UP000002311">
    <property type="component" value="Chromosome VII"/>
</dbReference>
<dbReference type="RNAct" id="Q01939">
    <property type="molecule type" value="protein"/>
</dbReference>
<dbReference type="GO" id="GO:0005634">
    <property type="term" value="C:nucleus"/>
    <property type="evidence" value="ECO:0000314"/>
    <property type="project" value="SGD"/>
</dbReference>
<dbReference type="GO" id="GO:0000502">
    <property type="term" value="C:proteasome complex"/>
    <property type="evidence" value="ECO:0000353"/>
    <property type="project" value="ComplexPortal"/>
</dbReference>
<dbReference type="GO" id="GO:0008540">
    <property type="term" value="C:proteasome regulatory particle, base subcomplex"/>
    <property type="evidence" value="ECO:0000314"/>
    <property type="project" value="SGD"/>
</dbReference>
<dbReference type="GO" id="GO:0034515">
    <property type="term" value="C:proteasome storage granule"/>
    <property type="evidence" value="ECO:0000314"/>
    <property type="project" value="SGD"/>
</dbReference>
<dbReference type="GO" id="GO:0005524">
    <property type="term" value="F:ATP binding"/>
    <property type="evidence" value="ECO:0007669"/>
    <property type="project" value="UniProtKB-KW"/>
</dbReference>
<dbReference type="GO" id="GO:0016887">
    <property type="term" value="F:ATP hydrolysis activity"/>
    <property type="evidence" value="ECO:0007669"/>
    <property type="project" value="InterPro"/>
</dbReference>
<dbReference type="GO" id="GO:0036402">
    <property type="term" value="F:proteasome-activating activity"/>
    <property type="evidence" value="ECO:0000318"/>
    <property type="project" value="GO_Central"/>
</dbReference>
<dbReference type="GO" id="GO:0019904">
    <property type="term" value="F:protein domain specific binding"/>
    <property type="evidence" value="ECO:0000314"/>
    <property type="project" value="SGD"/>
</dbReference>
<dbReference type="GO" id="GO:0031625">
    <property type="term" value="F:ubiquitin protein ligase binding"/>
    <property type="evidence" value="ECO:0000353"/>
    <property type="project" value="SGD"/>
</dbReference>
<dbReference type="GO" id="GO:0006338">
    <property type="term" value="P:chromatin remodeling"/>
    <property type="evidence" value="ECO:0000315"/>
    <property type="project" value="SGD"/>
</dbReference>
<dbReference type="GO" id="GO:0070651">
    <property type="term" value="P:nonfunctional rRNA decay"/>
    <property type="evidence" value="ECO:0000315"/>
    <property type="project" value="SGD"/>
</dbReference>
<dbReference type="GO" id="GO:0006289">
    <property type="term" value="P:nucleotide-excision repair"/>
    <property type="evidence" value="ECO:0000316"/>
    <property type="project" value="SGD"/>
</dbReference>
<dbReference type="GO" id="GO:0045899">
    <property type="term" value="P:positive regulation of RNA polymerase II transcription preinitiation complex assembly"/>
    <property type="evidence" value="ECO:0000315"/>
    <property type="project" value="SGD"/>
</dbReference>
<dbReference type="GO" id="GO:0032968">
    <property type="term" value="P:positive regulation of transcription elongation by RNA polymerase II"/>
    <property type="evidence" value="ECO:0000315"/>
    <property type="project" value="SGD"/>
</dbReference>
<dbReference type="GO" id="GO:0070682">
    <property type="term" value="P:proteasome regulatory particle assembly"/>
    <property type="evidence" value="ECO:0000315"/>
    <property type="project" value="SGD"/>
</dbReference>
<dbReference type="GO" id="GO:0043161">
    <property type="term" value="P:proteasome-mediated ubiquitin-dependent protein catabolic process"/>
    <property type="evidence" value="ECO:0000314"/>
    <property type="project" value="ComplexPortal"/>
</dbReference>
<dbReference type="CDD" id="cd19502">
    <property type="entry name" value="RecA-like_PAN_like"/>
    <property type="match status" value="1"/>
</dbReference>
<dbReference type="FunFam" id="1.10.8.60:FF:000006">
    <property type="entry name" value="26S protease regulatory subunit 8"/>
    <property type="match status" value="1"/>
</dbReference>
<dbReference type="FunFam" id="2.40.50.140:FF:000044">
    <property type="entry name" value="26S protease regulatory subunit 8"/>
    <property type="match status" value="1"/>
</dbReference>
<dbReference type="FunFam" id="3.40.50.300:FF:000030">
    <property type="entry name" value="26S protease regulatory subunit 8"/>
    <property type="match status" value="1"/>
</dbReference>
<dbReference type="Gene3D" id="1.10.8.60">
    <property type="match status" value="1"/>
</dbReference>
<dbReference type="Gene3D" id="2.40.50.140">
    <property type="entry name" value="Nucleic acid-binding proteins"/>
    <property type="match status" value="1"/>
</dbReference>
<dbReference type="Gene3D" id="3.40.50.300">
    <property type="entry name" value="P-loop containing nucleotide triphosphate hydrolases"/>
    <property type="match status" value="1"/>
</dbReference>
<dbReference type="InterPro" id="IPR050221">
    <property type="entry name" value="26S_Proteasome_ATPase"/>
</dbReference>
<dbReference type="InterPro" id="IPR003593">
    <property type="entry name" value="AAA+_ATPase"/>
</dbReference>
<dbReference type="InterPro" id="IPR041569">
    <property type="entry name" value="AAA_lid_3"/>
</dbReference>
<dbReference type="InterPro" id="IPR003959">
    <property type="entry name" value="ATPase_AAA_core"/>
</dbReference>
<dbReference type="InterPro" id="IPR003960">
    <property type="entry name" value="ATPase_AAA_CS"/>
</dbReference>
<dbReference type="InterPro" id="IPR012340">
    <property type="entry name" value="NA-bd_OB-fold"/>
</dbReference>
<dbReference type="InterPro" id="IPR027417">
    <property type="entry name" value="P-loop_NTPase"/>
</dbReference>
<dbReference type="InterPro" id="IPR032501">
    <property type="entry name" value="Prot_ATP_ID_OB_2nd"/>
</dbReference>
<dbReference type="PANTHER" id="PTHR23073">
    <property type="entry name" value="26S PROTEASOME REGULATORY SUBUNIT"/>
    <property type="match status" value="1"/>
</dbReference>
<dbReference type="Pfam" id="PF00004">
    <property type="entry name" value="AAA"/>
    <property type="match status" value="1"/>
</dbReference>
<dbReference type="Pfam" id="PF17862">
    <property type="entry name" value="AAA_lid_3"/>
    <property type="match status" value="1"/>
</dbReference>
<dbReference type="Pfam" id="PF16450">
    <property type="entry name" value="Prot_ATP_ID_OB_C"/>
    <property type="match status" value="1"/>
</dbReference>
<dbReference type="SMART" id="SM00382">
    <property type="entry name" value="AAA"/>
    <property type="match status" value="1"/>
</dbReference>
<dbReference type="SUPFAM" id="SSF52540">
    <property type="entry name" value="P-loop containing nucleoside triphosphate hydrolases"/>
    <property type="match status" value="1"/>
</dbReference>
<dbReference type="PROSITE" id="PS00674">
    <property type="entry name" value="AAA"/>
    <property type="match status" value="1"/>
</dbReference>
<sequence>MTAAVTSSNIVLETHESGIKPYFEQKIQETELKIRSKTENVRRLEAQRNALNDKVRFIKDELRLLQEPGSYVGEVIKIVSDKKVLVKVQPEGKYIVDVAKDINVKDLKASQRVCLRSDSYMLHKVLENKADPLVSLMMVEKVPDSTYDMVGGLTKQIKEIKEVIELPVKHPELFESLGIAQPKGVILYGPPGTGKTLLARAVAHHTDCKFIRVSGAELVQKYIGEGSRMVRELFVMAREHAPSIIFMDEIDSIGSTRVEGSGGGDSEVQRTMLELLNQLDGFETSKNIKIIMATNRLDILDPALLRPGRIDRKIEFPPPSVAARAEILRIHSRKMNLTRGINLRKVAEKMNGCSGADVKGVCTEAGMYALRERRIHVTQEDFELAVGKVMNKNQETAISVAKLFK</sequence>
<evidence type="ECO:0000250" key="1"/>
<evidence type="ECO:0000269" key="2">
    <source>
    </source>
</evidence>
<evidence type="ECO:0000269" key="3">
    <source>
    </source>
</evidence>
<evidence type="ECO:0000269" key="4">
    <source>
    </source>
</evidence>
<evidence type="ECO:0000269" key="5">
    <source>
    </source>
</evidence>
<evidence type="ECO:0000269" key="6">
    <source>
    </source>
</evidence>
<evidence type="ECO:0000305" key="7"/>
<gene>
    <name type="primary">RPT6</name>
    <name type="synonym">CIM3</name>
    <name type="synonym">CRL3</name>
    <name type="synonym">SUG1</name>
    <name type="synonym">TBPY</name>
    <name type="synonym">TBY1</name>
    <name type="ordered locus">YGL048C</name>
</gene>
<protein>
    <recommendedName>
        <fullName>26S proteasome regulatory subunit 8 homolog</fullName>
    </recommendedName>
    <alternativeName>
        <fullName>Protein CIM3</fullName>
    </alternativeName>
    <alternativeName>
        <fullName>Protein SUG1</fullName>
    </alternativeName>
    <alternativeName>
        <fullName>Tat-binding protein TBY1</fullName>
    </alternativeName>
</protein>
<keyword id="KW-0002">3D-structure</keyword>
<keyword id="KW-0007">Acetylation</keyword>
<keyword id="KW-0067">ATP-binding</keyword>
<keyword id="KW-0963">Cytoplasm</keyword>
<keyword id="KW-0903">Direct protein sequencing</keyword>
<keyword id="KW-0547">Nucleotide-binding</keyword>
<keyword id="KW-0539">Nucleus</keyword>
<keyword id="KW-0647">Proteasome</keyword>
<keyword id="KW-1185">Reference proteome</keyword>
<proteinExistence type="evidence at protein level"/>
<name>PRS8_YEAST</name>
<organism>
    <name type="scientific">Saccharomyces cerevisiae (strain ATCC 204508 / S288c)</name>
    <name type="common">Baker's yeast</name>
    <dbReference type="NCBI Taxonomy" id="559292"/>
    <lineage>
        <taxon>Eukaryota</taxon>
        <taxon>Fungi</taxon>
        <taxon>Dikarya</taxon>
        <taxon>Ascomycota</taxon>
        <taxon>Saccharomycotina</taxon>
        <taxon>Saccharomycetes</taxon>
        <taxon>Saccharomycetales</taxon>
        <taxon>Saccharomycetaceae</taxon>
        <taxon>Saccharomyces</taxon>
    </lineage>
</organism>